<gene>
    <name type="primary">RBP45B</name>
    <name type="ordered locus">At1g11650</name>
    <name type="ORF">F25C20.21</name>
</gene>
<evidence type="ECO:0000250" key="1"/>
<evidence type="ECO:0000255" key="2">
    <source>
        <dbReference type="PROSITE-ProRule" id="PRU00176"/>
    </source>
</evidence>
<evidence type="ECO:0000256" key="3">
    <source>
        <dbReference type="SAM" id="MobiDB-lite"/>
    </source>
</evidence>
<evidence type="ECO:0000269" key="4">
    <source>
    </source>
</evidence>
<evidence type="ECO:0000269" key="5">
    <source>
    </source>
</evidence>
<evidence type="ECO:0000269" key="6">
    <source>
    </source>
</evidence>
<evidence type="ECO:0000269" key="7">
    <source>
    </source>
</evidence>
<evidence type="ECO:0000303" key="8">
    <source>
    </source>
</evidence>
<evidence type="ECO:0000305" key="9"/>
<accession>Q9SAB3</accession>
<accession>C0Z2Q4</accession>
<accession>F4I8Z2</accession>
<accession>Q8LBV8</accession>
<comment type="function">
    <text evidence="7">Heterogeneous nuclear ribonucleoprotein (hnRNP)-protein binding the poly(A) tail of mRNA and probably involved in some steps of pre-mRNA maturation.</text>
</comment>
<comment type="subunit">
    <text evidence="7">Both isoform 1 and isoform 2 interact with poly(A)+ RNA in nucleus.</text>
</comment>
<comment type="subcellular location">
    <subcellularLocation>
        <location evidence="1">Nucleus</location>
    </subcellularLocation>
</comment>
<comment type="alternative products">
    <event type="alternative splicing"/>
    <isoform>
        <id>Q9SAB3-1</id>
        <name>1</name>
        <sequence type="displayed"/>
    </isoform>
    <isoform>
        <id>Q9SAB3-2</id>
        <name>2</name>
        <name>AtRBP45b-SV1</name>
        <name>AtRBP45b-SV2</name>
        <sequence type="described" ref="VSP_042354"/>
    </isoform>
    <isoform>
        <id>Q9SAB3-3</id>
        <name>3</name>
        <sequence type="described" ref="VSP_042352 VSP_042353"/>
    </isoform>
</comment>
<comment type="tissue specificity">
    <text evidence="4 5 7">Expressed in roots, leaves, stems, flowers, siliques, and seedlings. Present in immature anther tissues (tapetum cells) and mature pollen grains.</text>
</comment>
<comment type="induction">
    <text evidence="6 7">By both biotic and abiotic stresses (e.g. ozone, oxidative chemicals and pathogens such as virulent and avirulent Pseudomonas syringae).</text>
</comment>
<comment type="similarity">
    <text evidence="9">Belongs to the polyadenylate-binding RBP45 family.</text>
</comment>
<comment type="sequence caution" evidence="9">
    <conflict type="erroneous initiation">
        <sequence resource="EMBL-CDS" id="AAM64532"/>
    </conflict>
    <text>Truncated N-terminus.</text>
</comment>
<dbReference type="EMBL" id="AC007296">
    <property type="protein sequence ID" value="AAD30259.1"/>
    <property type="molecule type" value="Genomic_DNA"/>
</dbReference>
<dbReference type="EMBL" id="CP002684">
    <property type="protein sequence ID" value="AEE28764.1"/>
    <property type="molecule type" value="Genomic_DNA"/>
</dbReference>
<dbReference type="EMBL" id="CP002684">
    <property type="protein sequence ID" value="AEE28765.1"/>
    <property type="molecule type" value="Genomic_DNA"/>
</dbReference>
<dbReference type="EMBL" id="AY093201">
    <property type="protein sequence ID" value="AAM13200.1"/>
    <property type="molecule type" value="mRNA"/>
</dbReference>
<dbReference type="EMBL" id="BT008494">
    <property type="protein sequence ID" value="AAP37853.1"/>
    <property type="molecule type" value="mRNA"/>
</dbReference>
<dbReference type="EMBL" id="AK318868">
    <property type="protein sequence ID" value="BAH56983.1"/>
    <property type="molecule type" value="mRNA"/>
</dbReference>
<dbReference type="EMBL" id="AY086969">
    <property type="protein sequence ID" value="AAM64532.1"/>
    <property type="status" value="ALT_INIT"/>
    <property type="molecule type" value="mRNA"/>
</dbReference>
<dbReference type="PIR" id="H86249">
    <property type="entry name" value="H86249"/>
</dbReference>
<dbReference type="RefSeq" id="NP_172630.1">
    <molecule id="Q9SAB3-1"/>
    <property type="nucleotide sequence ID" value="NM_101037.4"/>
</dbReference>
<dbReference type="RefSeq" id="NP_849641.1">
    <molecule id="Q9SAB3-2"/>
    <property type="nucleotide sequence ID" value="NM_179310.2"/>
</dbReference>
<dbReference type="SMR" id="Q9SAB3"/>
<dbReference type="BioGRID" id="22948">
    <property type="interactions" value="12"/>
</dbReference>
<dbReference type="FunCoup" id="Q9SAB3">
    <property type="interactions" value="1536"/>
</dbReference>
<dbReference type="IntAct" id="Q9SAB3">
    <property type="interactions" value="12"/>
</dbReference>
<dbReference type="STRING" id="3702.Q9SAB3"/>
<dbReference type="iPTMnet" id="Q9SAB3"/>
<dbReference type="PaxDb" id="3702-AT1G11650.2"/>
<dbReference type="ProMEX" id="Q9SAB3"/>
<dbReference type="ProteomicsDB" id="236504">
    <molecule id="Q9SAB3-1"/>
</dbReference>
<dbReference type="EnsemblPlants" id="AT1G11650.1">
    <molecule id="Q9SAB3-2"/>
    <property type="protein sequence ID" value="AT1G11650.1"/>
    <property type="gene ID" value="AT1G11650"/>
</dbReference>
<dbReference type="EnsemblPlants" id="AT1G11650.2">
    <molecule id="Q9SAB3-1"/>
    <property type="protein sequence ID" value="AT1G11650.2"/>
    <property type="gene ID" value="AT1G11650"/>
</dbReference>
<dbReference type="GeneID" id="837708"/>
<dbReference type="Gramene" id="AT1G11650.1">
    <molecule id="Q9SAB3-2"/>
    <property type="protein sequence ID" value="AT1G11650.1"/>
    <property type="gene ID" value="AT1G11650"/>
</dbReference>
<dbReference type="Gramene" id="AT1G11650.2">
    <molecule id="Q9SAB3-1"/>
    <property type="protein sequence ID" value="AT1G11650.2"/>
    <property type="gene ID" value="AT1G11650"/>
</dbReference>
<dbReference type="KEGG" id="ath:AT1G11650"/>
<dbReference type="Araport" id="AT1G11650"/>
<dbReference type="TAIR" id="AT1G11650">
    <property type="gene designation" value="RBP45B"/>
</dbReference>
<dbReference type="eggNOG" id="KOG0118">
    <property type="taxonomic scope" value="Eukaryota"/>
</dbReference>
<dbReference type="HOGENOM" id="CLU_016304_2_1_1"/>
<dbReference type="InParanoid" id="Q9SAB3"/>
<dbReference type="OMA" id="PMWAPQS"/>
<dbReference type="OrthoDB" id="446113at2759"/>
<dbReference type="PhylomeDB" id="Q9SAB3"/>
<dbReference type="CD-CODE" id="4299E36E">
    <property type="entry name" value="Nucleolus"/>
</dbReference>
<dbReference type="PRO" id="PR:Q9SAB3"/>
<dbReference type="Proteomes" id="UP000006548">
    <property type="component" value="Chromosome 1"/>
</dbReference>
<dbReference type="ExpressionAtlas" id="Q9SAB3">
    <property type="expression patterns" value="baseline and differential"/>
</dbReference>
<dbReference type="GO" id="GO:0005576">
    <property type="term" value="C:extracellular region"/>
    <property type="evidence" value="ECO:0007005"/>
    <property type="project" value="TAIR"/>
</dbReference>
<dbReference type="GO" id="GO:0005634">
    <property type="term" value="C:nucleus"/>
    <property type="evidence" value="ECO:0000250"/>
    <property type="project" value="UniProtKB"/>
</dbReference>
<dbReference type="GO" id="GO:0003729">
    <property type="term" value="F:mRNA binding"/>
    <property type="evidence" value="ECO:0000314"/>
    <property type="project" value="TAIR"/>
</dbReference>
<dbReference type="GO" id="GO:0008143">
    <property type="term" value="F:poly(A) binding"/>
    <property type="evidence" value="ECO:0000250"/>
    <property type="project" value="UniProtKB"/>
</dbReference>
<dbReference type="GO" id="GO:0003723">
    <property type="term" value="F:RNA binding"/>
    <property type="evidence" value="ECO:0000314"/>
    <property type="project" value="TAIR"/>
</dbReference>
<dbReference type="GO" id="GO:0006397">
    <property type="term" value="P:mRNA processing"/>
    <property type="evidence" value="ECO:0007669"/>
    <property type="project" value="UniProtKB-KW"/>
</dbReference>
<dbReference type="GO" id="GO:0010193">
    <property type="term" value="P:response to ozone"/>
    <property type="evidence" value="ECO:0000270"/>
    <property type="project" value="TAIR"/>
</dbReference>
<dbReference type="CDD" id="cd12344">
    <property type="entry name" value="RRM1_SECp43_like"/>
    <property type="match status" value="1"/>
</dbReference>
<dbReference type="CDD" id="cd12345">
    <property type="entry name" value="RRM2_SECp43_like"/>
    <property type="match status" value="1"/>
</dbReference>
<dbReference type="FunFam" id="3.30.70.330:FF:000405">
    <property type="entry name" value="polyadenylate-binding protein RBP45"/>
    <property type="match status" value="1"/>
</dbReference>
<dbReference type="FunFam" id="3.30.70.330:FF:000236">
    <property type="entry name" value="Polyadenylate-binding protein RBP45C"/>
    <property type="match status" value="1"/>
</dbReference>
<dbReference type="FunFam" id="3.30.70.330:FF:000103">
    <property type="entry name" value="Polyadenylate-binding protein RBP47B"/>
    <property type="match status" value="1"/>
</dbReference>
<dbReference type="Gene3D" id="3.30.70.330">
    <property type="match status" value="3"/>
</dbReference>
<dbReference type="InterPro" id="IPR012677">
    <property type="entry name" value="Nucleotide-bd_a/b_plait_sf"/>
</dbReference>
<dbReference type="InterPro" id="IPR035979">
    <property type="entry name" value="RBD_domain_sf"/>
</dbReference>
<dbReference type="InterPro" id="IPR050825">
    <property type="entry name" value="RBM42_RBP45_47-like"/>
</dbReference>
<dbReference type="InterPro" id="IPR000504">
    <property type="entry name" value="RRM_dom"/>
</dbReference>
<dbReference type="PANTHER" id="PTHR47640:SF48">
    <property type="entry name" value="POLYADENYLATE-BINDING PROTEIN RBP45B"/>
    <property type="match status" value="1"/>
</dbReference>
<dbReference type="PANTHER" id="PTHR47640">
    <property type="entry name" value="TRNA SELENOCYSTEINE 1-ASSOCIATED PROTEIN 1-RELATED-RELATED"/>
    <property type="match status" value="1"/>
</dbReference>
<dbReference type="Pfam" id="PF00076">
    <property type="entry name" value="RRM_1"/>
    <property type="match status" value="3"/>
</dbReference>
<dbReference type="SMART" id="SM00360">
    <property type="entry name" value="RRM"/>
    <property type="match status" value="3"/>
</dbReference>
<dbReference type="SUPFAM" id="SSF54928">
    <property type="entry name" value="RNA-binding domain, RBD"/>
    <property type="match status" value="3"/>
</dbReference>
<dbReference type="PROSITE" id="PS50102">
    <property type="entry name" value="RRM"/>
    <property type="match status" value="3"/>
</dbReference>
<proteinExistence type="evidence at protein level"/>
<name>RB45B_ARATH</name>
<organism>
    <name type="scientific">Arabidopsis thaliana</name>
    <name type="common">Mouse-ear cress</name>
    <dbReference type="NCBI Taxonomy" id="3702"/>
    <lineage>
        <taxon>Eukaryota</taxon>
        <taxon>Viridiplantae</taxon>
        <taxon>Streptophyta</taxon>
        <taxon>Embryophyta</taxon>
        <taxon>Tracheophyta</taxon>
        <taxon>Spermatophyta</taxon>
        <taxon>Magnoliopsida</taxon>
        <taxon>eudicotyledons</taxon>
        <taxon>Gunneridae</taxon>
        <taxon>Pentapetalae</taxon>
        <taxon>rosids</taxon>
        <taxon>malvids</taxon>
        <taxon>Brassicales</taxon>
        <taxon>Brassicaceae</taxon>
        <taxon>Camelineae</taxon>
        <taxon>Arabidopsis</taxon>
    </lineage>
</organism>
<sequence>MMQQPPPGGILPHHAPPPSAQQQYGYQQPYGIAGAAPPPPQMWNPQAAAPPSVQPTTADEIRTLWIGDLQYWMDENFLYGCFAHTGEMVSAKVIRNKQTGQVEGYGFIEFASHAAAERVLQTFNNAPIPSFPDQLFRLNWASLSSGDKRDDSPDYTIFVGDLAADVTDYILLETFRASYPSVKGAKVVIDRVTGRTKGYGFVRFSDESEQIRAMTEMNGVPCSTRPMRIGPAASKKGVTGQRDSYQSSAAGVTTDNDPNNTTVFVGGLDASVTDDHLKNVFSQYGEIVHVKIPAGKRCGFVQFSEKSCAEEALRMLNGVQLGGTTVRLSWGRSPSNKQSGDPSQFYYGGYGQGQEQYGYTMPQDPNAYYGGYSGGGYSGGYQQTPQAGQQPPQQPPQQQQVGFSY</sequence>
<protein>
    <recommendedName>
        <fullName>Polyadenylate-binding protein RBP45B</fullName>
        <shortName>Poly(A)-binding protein RBP45B</shortName>
    </recommendedName>
    <alternativeName>
        <fullName>RNA-binding protein 45B</fullName>
        <shortName>AtRBP45B</shortName>
    </alternativeName>
</protein>
<feature type="chain" id="PRO_0000415763" description="Polyadenylate-binding protein RBP45B">
    <location>
        <begin position="1"/>
        <end position="405"/>
    </location>
</feature>
<feature type="domain" description="RRM 1" evidence="2">
    <location>
        <begin position="62"/>
        <end position="143"/>
    </location>
</feature>
<feature type="domain" description="RRM 2" evidence="2">
    <location>
        <begin position="155"/>
        <end position="234"/>
    </location>
</feature>
<feature type="domain" description="RRM 3" evidence="2">
    <location>
        <begin position="261"/>
        <end position="333"/>
    </location>
</feature>
<feature type="region of interest" description="Disordered" evidence="3">
    <location>
        <begin position="1"/>
        <end position="54"/>
    </location>
</feature>
<feature type="region of interest" description="Disordered" evidence="3">
    <location>
        <begin position="379"/>
        <end position="405"/>
    </location>
</feature>
<feature type="compositionally biased region" description="Pro residues" evidence="3">
    <location>
        <begin position="1"/>
        <end position="19"/>
    </location>
</feature>
<feature type="compositionally biased region" description="Low complexity" evidence="3">
    <location>
        <begin position="20"/>
        <end position="35"/>
    </location>
</feature>
<feature type="compositionally biased region" description="Low complexity" evidence="3">
    <location>
        <begin position="380"/>
        <end position="405"/>
    </location>
</feature>
<feature type="splice variant" id="VSP_042352" description="In isoform 3." evidence="8">
    <original>VFVGGLDAS</original>
    <variation>ATTAATSRV</variation>
    <location>
        <begin position="263"/>
        <end position="271"/>
    </location>
</feature>
<feature type="splice variant" id="VSP_042353" description="In isoform 3." evidence="8">
    <location>
        <begin position="272"/>
        <end position="405"/>
    </location>
</feature>
<feature type="splice variant" id="VSP_042354" description="In isoform 2." evidence="9">
    <location>
        <begin position="307"/>
        <end position="405"/>
    </location>
</feature>
<feature type="sequence conflict" description="In Ref. 5; AAM64532." evidence="9" ref="5">
    <original>D</original>
    <variation>N</variation>
    <location>
        <position position="190"/>
    </location>
</feature>
<reference key="1">
    <citation type="journal article" date="2000" name="Nature">
        <title>Sequence and analysis of chromosome 1 of the plant Arabidopsis thaliana.</title>
        <authorList>
            <person name="Theologis A."/>
            <person name="Ecker J.R."/>
            <person name="Palm C.J."/>
            <person name="Federspiel N.A."/>
            <person name="Kaul S."/>
            <person name="White O."/>
            <person name="Alonso J."/>
            <person name="Altafi H."/>
            <person name="Araujo R."/>
            <person name="Bowman C.L."/>
            <person name="Brooks S.Y."/>
            <person name="Buehler E."/>
            <person name="Chan A."/>
            <person name="Chao Q."/>
            <person name="Chen H."/>
            <person name="Cheuk R.F."/>
            <person name="Chin C.W."/>
            <person name="Chung M.K."/>
            <person name="Conn L."/>
            <person name="Conway A.B."/>
            <person name="Conway A.R."/>
            <person name="Creasy T.H."/>
            <person name="Dewar K."/>
            <person name="Dunn P."/>
            <person name="Etgu P."/>
            <person name="Feldblyum T.V."/>
            <person name="Feng J.-D."/>
            <person name="Fong B."/>
            <person name="Fujii C.Y."/>
            <person name="Gill J.E."/>
            <person name="Goldsmith A.D."/>
            <person name="Haas B."/>
            <person name="Hansen N.F."/>
            <person name="Hughes B."/>
            <person name="Huizar L."/>
            <person name="Hunter J.L."/>
            <person name="Jenkins J."/>
            <person name="Johnson-Hopson C."/>
            <person name="Khan S."/>
            <person name="Khaykin E."/>
            <person name="Kim C.J."/>
            <person name="Koo H.L."/>
            <person name="Kremenetskaia I."/>
            <person name="Kurtz D.B."/>
            <person name="Kwan A."/>
            <person name="Lam B."/>
            <person name="Langin-Hooper S."/>
            <person name="Lee A."/>
            <person name="Lee J.M."/>
            <person name="Lenz C.A."/>
            <person name="Li J.H."/>
            <person name="Li Y.-P."/>
            <person name="Lin X."/>
            <person name="Liu S.X."/>
            <person name="Liu Z.A."/>
            <person name="Luros J.S."/>
            <person name="Maiti R."/>
            <person name="Marziali A."/>
            <person name="Militscher J."/>
            <person name="Miranda M."/>
            <person name="Nguyen M."/>
            <person name="Nierman W.C."/>
            <person name="Osborne B.I."/>
            <person name="Pai G."/>
            <person name="Peterson J."/>
            <person name="Pham P.K."/>
            <person name="Rizzo M."/>
            <person name="Rooney T."/>
            <person name="Rowley D."/>
            <person name="Sakano H."/>
            <person name="Salzberg S.L."/>
            <person name="Schwartz J.R."/>
            <person name="Shinn P."/>
            <person name="Southwick A.M."/>
            <person name="Sun H."/>
            <person name="Tallon L.J."/>
            <person name="Tambunga G."/>
            <person name="Toriumi M.J."/>
            <person name="Town C.D."/>
            <person name="Utterback T."/>
            <person name="Van Aken S."/>
            <person name="Vaysberg M."/>
            <person name="Vysotskaia V.S."/>
            <person name="Walker M."/>
            <person name="Wu D."/>
            <person name="Yu G."/>
            <person name="Fraser C.M."/>
            <person name="Venter J.C."/>
            <person name="Davis R.W."/>
        </authorList>
    </citation>
    <scope>NUCLEOTIDE SEQUENCE [LARGE SCALE GENOMIC DNA]</scope>
    <source>
        <strain>cv. Columbia</strain>
    </source>
</reference>
<reference key="2">
    <citation type="journal article" date="2017" name="Plant J.">
        <title>Araport11: a complete reannotation of the Arabidopsis thaliana reference genome.</title>
        <authorList>
            <person name="Cheng C.Y."/>
            <person name="Krishnakumar V."/>
            <person name="Chan A.P."/>
            <person name="Thibaud-Nissen F."/>
            <person name="Schobel S."/>
            <person name="Town C.D."/>
        </authorList>
    </citation>
    <scope>GENOME REANNOTATION</scope>
    <source>
        <strain>cv. Columbia</strain>
    </source>
</reference>
<reference key="3">
    <citation type="journal article" date="2003" name="Science">
        <title>Empirical analysis of transcriptional activity in the Arabidopsis genome.</title>
        <authorList>
            <person name="Yamada K."/>
            <person name="Lim J."/>
            <person name="Dale J.M."/>
            <person name="Chen H."/>
            <person name="Shinn P."/>
            <person name="Palm C.J."/>
            <person name="Southwick A.M."/>
            <person name="Wu H.C."/>
            <person name="Kim C.J."/>
            <person name="Nguyen M."/>
            <person name="Pham P.K."/>
            <person name="Cheuk R.F."/>
            <person name="Karlin-Newmann G."/>
            <person name="Liu S.X."/>
            <person name="Lam B."/>
            <person name="Sakano H."/>
            <person name="Wu T."/>
            <person name="Yu G."/>
            <person name="Miranda M."/>
            <person name="Quach H.L."/>
            <person name="Tripp M."/>
            <person name="Chang C.H."/>
            <person name="Lee J.M."/>
            <person name="Toriumi M.J."/>
            <person name="Chan M.M."/>
            <person name="Tang C.C."/>
            <person name="Onodera C.S."/>
            <person name="Deng J.M."/>
            <person name="Akiyama K."/>
            <person name="Ansari Y."/>
            <person name="Arakawa T."/>
            <person name="Banh J."/>
            <person name="Banno F."/>
            <person name="Bowser L."/>
            <person name="Brooks S.Y."/>
            <person name="Carninci P."/>
            <person name="Chao Q."/>
            <person name="Choy N."/>
            <person name="Enju A."/>
            <person name="Goldsmith A.D."/>
            <person name="Gurjal M."/>
            <person name="Hansen N.F."/>
            <person name="Hayashizaki Y."/>
            <person name="Johnson-Hopson C."/>
            <person name="Hsuan V.W."/>
            <person name="Iida K."/>
            <person name="Karnes M."/>
            <person name="Khan S."/>
            <person name="Koesema E."/>
            <person name="Ishida J."/>
            <person name="Jiang P.X."/>
            <person name="Jones T."/>
            <person name="Kawai J."/>
            <person name="Kamiya A."/>
            <person name="Meyers C."/>
            <person name="Nakajima M."/>
            <person name="Narusaka M."/>
            <person name="Seki M."/>
            <person name="Sakurai T."/>
            <person name="Satou M."/>
            <person name="Tamse R."/>
            <person name="Vaysberg M."/>
            <person name="Wallender E.K."/>
            <person name="Wong C."/>
            <person name="Yamamura Y."/>
            <person name="Yuan S."/>
            <person name="Shinozaki K."/>
            <person name="Davis R.W."/>
            <person name="Theologis A."/>
            <person name="Ecker J.R."/>
        </authorList>
    </citation>
    <scope>NUCLEOTIDE SEQUENCE [LARGE SCALE MRNA] (ISOFORM 1)</scope>
    <source>
        <strain>cv. Columbia</strain>
    </source>
</reference>
<reference key="4">
    <citation type="journal article" date="2009" name="DNA Res.">
        <title>Analysis of multiple occurrences of alternative splicing events in Arabidopsis thaliana using novel sequenced full-length cDNAs.</title>
        <authorList>
            <person name="Iida K."/>
            <person name="Fukami-Kobayashi K."/>
            <person name="Toyoda A."/>
            <person name="Sakaki Y."/>
            <person name="Kobayashi M."/>
            <person name="Seki M."/>
            <person name="Shinozaki K."/>
        </authorList>
    </citation>
    <scope>NUCLEOTIDE SEQUENCE [LARGE SCALE MRNA] (ISOFORM 3)</scope>
    <source>
        <strain>cv. Columbia</strain>
    </source>
</reference>
<reference key="5">
    <citation type="submission" date="2002-03" db="EMBL/GenBank/DDBJ databases">
        <title>Full-length cDNA from Arabidopsis thaliana.</title>
        <authorList>
            <person name="Brover V.V."/>
            <person name="Troukhan M.E."/>
            <person name="Alexandrov N.A."/>
            <person name="Lu Y.-P."/>
            <person name="Flavell R.B."/>
            <person name="Feldmann K.A."/>
        </authorList>
    </citation>
    <scope>NUCLEOTIDE SEQUENCE [LARGE SCALE MRNA] (ISOFORM 1)</scope>
</reference>
<reference key="6">
    <citation type="journal article" date="2000" name="RNA">
        <title>RBP45 and RBP47, two oligouridylate-specific hnRNP-like proteins interacting with poly(A)+ RNA in nuclei of plant cells.</title>
        <authorList>
            <person name="Lorkovic Z.J."/>
            <person name="Wieczorek Kirk D.A."/>
            <person name="Klahre U."/>
            <person name="Hemmings-Mieszczak M."/>
            <person name="Filipowicz W."/>
        </authorList>
    </citation>
    <scope>TISSUE SPECIFICITY</scope>
    <scope>GENE FAMILY</scope>
    <scope>NOMENCLATURE</scope>
</reference>
<reference key="7">
    <citation type="journal article" date="2006" name="Genes Genet. Syst.">
        <title>Molecular characterization of two anther-specific genes encoding putative RNA-binding proteins, AtRBP45s, in Arabidopsis thaliana.</title>
        <authorList>
            <person name="Park J.-I."/>
            <person name="Endo M."/>
            <person name="Kazama T."/>
            <person name="Saito H."/>
            <person name="Hakozaki H."/>
            <person name="Takada Y."/>
            <person name="Kawagishi-Kobayashi M."/>
            <person name="Watanabe M."/>
        </authorList>
    </citation>
    <scope>TISSUE SPECIFICITY</scope>
</reference>
<reference key="8">
    <citation type="journal article" date="2009" name="Proteomics">
        <title>Combining subproteome enrichment and Rubisco depletion enables identification of low abundance proteins differentially regulated during plant defense.</title>
        <authorList>
            <person name="Widjaja I."/>
            <person name="Naumann K."/>
            <person name="Roth U."/>
            <person name="Wolf N."/>
            <person name="Mackey D."/>
            <person name="Dangl J.L."/>
            <person name="Scheel D."/>
            <person name="Lee J."/>
        </authorList>
    </citation>
    <scope>INDUCTION BY PATHOGENS</scope>
    <scope>IDENTIFICATION BY MASS SPECTROMETRY</scope>
    <source>
        <strain>cv. Columbia</strain>
    </source>
</reference>
<reference key="9">
    <citation type="journal article" date="2011" name="Mol. Cells">
        <title>Phylogenetic and expression analysis of RNA-binding proteins with triple RNA recognition motifs in plants.</title>
        <authorList>
            <person name="Peal L."/>
            <person name="Jambunathan N."/>
            <person name="Mahalingam R."/>
        </authorList>
    </citation>
    <scope>FUNCTION</scope>
    <scope>SUBUNIT</scope>
    <scope>INDUCTION BY BIOTIC AND ABIOTIC STRESSES</scope>
    <scope>TISSUE SPECIFICITY</scope>
    <scope>GENE FAMILY</scope>
    <source>
        <strain>cv. Columbia</strain>
        <strain>cv. Wassilewskija</strain>
    </source>
</reference>
<keyword id="KW-0025">Alternative splicing</keyword>
<keyword id="KW-0507">mRNA processing</keyword>
<keyword id="KW-0539">Nucleus</keyword>
<keyword id="KW-1185">Reference proteome</keyword>
<keyword id="KW-0677">Repeat</keyword>
<keyword id="KW-0694">RNA-binding</keyword>
<keyword id="KW-0346">Stress response</keyword>